<accession>Q9A301</accession>
<evidence type="ECO:0000255" key="1">
    <source>
        <dbReference type="HAMAP-Rule" id="MF_00154"/>
    </source>
</evidence>
<reference key="1">
    <citation type="journal article" date="2001" name="Proc. Natl. Acad. Sci. U.S.A.">
        <title>Complete genome sequence of Caulobacter crescentus.</title>
        <authorList>
            <person name="Nierman W.C."/>
            <person name="Feldblyum T.V."/>
            <person name="Laub M.T."/>
            <person name="Paulsen I.T."/>
            <person name="Nelson K.E."/>
            <person name="Eisen J.A."/>
            <person name="Heidelberg J.F."/>
            <person name="Alley M.R.K."/>
            <person name="Ohta N."/>
            <person name="Maddock J.R."/>
            <person name="Potocka I."/>
            <person name="Nelson W.C."/>
            <person name="Newton A."/>
            <person name="Stephens C."/>
            <person name="Phadke N.D."/>
            <person name="Ely B."/>
            <person name="DeBoy R.T."/>
            <person name="Dodson R.J."/>
            <person name="Durkin A.S."/>
            <person name="Gwinn M.L."/>
            <person name="Haft D.H."/>
            <person name="Kolonay J.F."/>
            <person name="Smit J."/>
            <person name="Craven M.B."/>
            <person name="Khouri H.M."/>
            <person name="Shetty J."/>
            <person name="Berry K.J."/>
            <person name="Utterback T.R."/>
            <person name="Tran K."/>
            <person name="Wolf A.M."/>
            <person name="Vamathevan J.J."/>
            <person name="Ermolaeva M.D."/>
            <person name="White O."/>
            <person name="Salzberg S.L."/>
            <person name="Venter J.C."/>
            <person name="Shapiro L."/>
            <person name="Fraser C.M."/>
        </authorList>
    </citation>
    <scope>NUCLEOTIDE SEQUENCE [LARGE SCALE GENOMIC DNA]</scope>
    <source>
        <strain>ATCC 19089 / CIP 103742 / CB 15</strain>
    </source>
</reference>
<keyword id="KW-0997">Cell inner membrane</keyword>
<keyword id="KW-1003">Cell membrane</keyword>
<keyword id="KW-0350">Heme biosynthesis</keyword>
<keyword id="KW-0472">Membrane</keyword>
<keyword id="KW-1185">Reference proteome</keyword>
<keyword id="KW-0808">Transferase</keyword>
<keyword id="KW-0812">Transmembrane</keyword>
<keyword id="KW-1133">Transmembrane helix</keyword>
<sequence length="333" mass="35663">MTSDSAETTPLRDSSETARWQDYFQLMKPRVMSLVVFTGLTGLLAARAPIHPVLAAIAVLCIAVGAGASGALNMWYDADIDQKMRRTRGRPVPAGKIKGEEAASLGVVLSLLSVMFLGFAVNWLAAGLLAFTIVFYAVVYTMWLKRWTAQNIVIGGLAGALPPAIGWAAATGSAPLNAWLMVAIIFFWTPPHFWALSLYVTTDYAKAGVPMLPVVKGARETRKQILLYSLILFPICLSPVLTGLGGPIYLAVSGLGGLVFLLLAWRVFASKAGDAADPRVADRALYDVTEDEKAAGAKAARNLFAFSILYLFALFAALLGEAVTGVRPLELLK</sequence>
<proteinExistence type="inferred from homology"/>
<feature type="chain" id="PRO_0000327036" description="Protoheme IX farnesyltransferase">
    <location>
        <begin position="1"/>
        <end position="333"/>
    </location>
</feature>
<feature type="transmembrane region" description="Helical" evidence="1">
    <location>
        <begin position="31"/>
        <end position="51"/>
    </location>
</feature>
<feature type="transmembrane region" description="Helical" evidence="1">
    <location>
        <begin position="52"/>
        <end position="72"/>
    </location>
</feature>
<feature type="transmembrane region" description="Helical" evidence="1">
    <location>
        <begin position="115"/>
        <end position="135"/>
    </location>
</feature>
<feature type="transmembrane region" description="Helical" evidence="1">
    <location>
        <begin position="152"/>
        <end position="172"/>
    </location>
</feature>
<feature type="transmembrane region" description="Helical" evidence="1">
    <location>
        <begin position="178"/>
        <end position="198"/>
    </location>
</feature>
<feature type="transmembrane region" description="Helical" evidence="1">
    <location>
        <begin position="223"/>
        <end position="243"/>
    </location>
</feature>
<feature type="transmembrane region" description="Helical" evidence="1">
    <location>
        <begin position="244"/>
        <end position="264"/>
    </location>
</feature>
<feature type="transmembrane region" description="Helical" evidence="1">
    <location>
        <begin position="303"/>
        <end position="323"/>
    </location>
</feature>
<gene>
    <name evidence="1" type="primary">ctaB</name>
    <name type="ordered locus">CC_3405</name>
</gene>
<protein>
    <recommendedName>
        <fullName evidence="1">Protoheme IX farnesyltransferase</fullName>
        <ecNumber evidence="1">2.5.1.141</ecNumber>
    </recommendedName>
    <alternativeName>
        <fullName evidence="1">Heme B farnesyltransferase</fullName>
    </alternativeName>
    <alternativeName>
        <fullName evidence="1">Heme O synthase</fullName>
    </alternativeName>
</protein>
<organism>
    <name type="scientific">Caulobacter vibrioides (strain ATCC 19089 / CIP 103742 / CB 15)</name>
    <name type="common">Caulobacter crescentus</name>
    <dbReference type="NCBI Taxonomy" id="190650"/>
    <lineage>
        <taxon>Bacteria</taxon>
        <taxon>Pseudomonadati</taxon>
        <taxon>Pseudomonadota</taxon>
        <taxon>Alphaproteobacteria</taxon>
        <taxon>Caulobacterales</taxon>
        <taxon>Caulobacteraceae</taxon>
        <taxon>Caulobacter</taxon>
    </lineage>
</organism>
<dbReference type="EC" id="2.5.1.141" evidence="1"/>
<dbReference type="EMBL" id="AE005673">
    <property type="protein sequence ID" value="AAK25367.1"/>
    <property type="molecule type" value="Genomic_DNA"/>
</dbReference>
<dbReference type="PIR" id="C87671">
    <property type="entry name" value="C87671"/>
</dbReference>
<dbReference type="RefSeq" id="NP_422199.1">
    <property type="nucleotide sequence ID" value="NC_002696.2"/>
</dbReference>
<dbReference type="SMR" id="Q9A301"/>
<dbReference type="STRING" id="190650.CC_3405"/>
<dbReference type="EnsemblBacteria" id="AAK25367">
    <property type="protein sequence ID" value="AAK25367"/>
    <property type="gene ID" value="CC_3405"/>
</dbReference>
<dbReference type="KEGG" id="ccr:CC_3405"/>
<dbReference type="PATRIC" id="fig|190650.5.peg.3413"/>
<dbReference type="eggNOG" id="COG0109">
    <property type="taxonomic scope" value="Bacteria"/>
</dbReference>
<dbReference type="HOGENOM" id="CLU_029631_0_2_5"/>
<dbReference type="BioCyc" id="CAULO:CC3405-MONOMER"/>
<dbReference type="UniPathway" id="UPA00834">
    <property type="reaction ID" value="UER00712"/>
</dbReference>
<dbReference type="Proteomes" id="UP000001816">
    <property type="component" value="Chromosome"/>
</dbReference>
<dbReference type="GO" id="GO:0005886">
    <property type="term" value="C:plasma membrane"/>
    <property type="evidence" value="ECO:0007669"/>
    <property type="project" value="UniProtKB-SubCell"/>
</dbReference>
<dbReference type="GO" id="GO:0008495">
    <property type="term" value="F:protoheme IX farnesyltransferase activity"/>
    <property type="evidence" value="ECO:0007669"/>
    <property type="project" value="UniProtKB-UniRule"/>
</dbReference>
<dbReference type="GO" id="GO:0048034">
    <property type="term" value="P:heme O biosynthetic process"/>
    <property type="evidence" value="ECO:0007669"/>
    <property type="project" value="UniProtKB-UniRule"/>
</dbReference>
<dbReference type="CDD" id="cd13957">
    <property type="entry name" value="PT_UbiA_Cox10"/>
    <property type="match status" value="1"/>
</dbReference>
<dbReference type="Gene3D" id="1.10.357.140">
    <property type="entry name" value="UbiA prenyltransferase"/>
    <property type="match status" value="1"/>
</dbReference>
<dbReference type="HAMAP" id="MF_00154">
    <property type="entry name" value="CyoE_CtaB"/>
    <property type="match status" value="1"/>
</dbReference>
<dbReference type="InterPro" id="IPR006369">
    <property type="entry name" value="Protohaem_IX_farnesylTrfase"/>
</dbReference>
<dbReference type="InterPro" id="IPR000537">
    <property type="entry name" value="UbiA_prenyltransferase"/>
</dbReference>
<dbReference type="InterPro" id="IPR030470">
    <property type="entry name" value="UbiA_prenylTrfase_CS"/>
</dbReference>
<dbReference type="InterPro" id="IPR044878">
    <property type="entry name" value="UbiA_sf"/>
</dbReference>
<dbReference type="NCBIfam" id="TIGR01473">
    <property type="entry name" value="cyoE_ctaB"/>
    <property type="match status" value="1"/>
</dbReference>
<dbReference type="NCBIfam" id="NF003349">
    <property type="entry name" value="PRK04375.1-2"/>
    <property type="match status" value="1"/>
</dbReference>
<dbReference type="PANTHER" id="PTHR43448:SF7">
    <property type="entry name" value="4-HYDROXYBENZOATE SOLANESYLTRANSFERASE"/>
    <property type="match status" value="1"/>
</dbReference>
<dbReference type="PANTHER" id="PTHR43448">
    <property type="entry name" value="PROTOHEME IX FARNESYLTRANSFERASE, MITOCHONDRIAL"/>
    <property type="match status" value="1"/>
</dbReference>
<dbReference type="Pfam" id="PF01040">
    <property type="entry name" value="UbiA"/>
    <property type="match status" value="1"/>
</dbReference>
<dbReference type="PROSITE" id="PS00943">
    <property type="entry name" value="UBIA"/>
    <property type="match status" value="1"/>
</dbReference>
<name>COXX_CAUVC</name>
<comment type="function">
    <text evidence="1">Converts heme B (protoheme IX) to heme O by substitution of the vinyl group on carbon 2 of heme B porphyrin ring with a hydroxyethyl farnesyl side group.</text>
</comment>
<comment type="catalytic activity">
    <reaction evidence="1">
        <text>heme b + (2E,6E)-farnesyl diphosphate + H2O = Fe(II)-heme o + diphosphate</text>
        <dbReference type="Rhea" id="RHEA:28070"/>
        <dbReference type="ChEBI" id="CHEBI:15377"/>
        <dbReference type="ChEBI" id="CHEBI:33019"/>
        <dbReference type="ChEBI" id="CHEBI:60344"/>
        <dbReference type="ChEBI" id="CHEBI:60530"/>
        <dbReference type="ChEBI" id="CHEBI:175763"/>
        <dbReference type="EC" id="2.5.1.141"/>
    </reaction>
</comment>
<comment type="pathway">
    <text evidence="1">Porphyrin-containing compound metabolism; heme O biosynthesis; heme O from protoheme: step 1/1.</text>
</comment>
<comment type="subcellular location">
    <subcellularLocation>
        <location evidence="1">Cell inner membrane</location>
        <topology evidence="1">Multi-pass membrane protein</topology>
    </subcellularLocation>
</comment>
<comment type="miscellaneous">
    <text evidence="1">Carbon 2 of the heme B porphyrin ring is defined according to the Fischer nomenclature.</text>
</comment>
<comment type="similarity">
    <text evidence="1">Belongs to the UbiA prenyltransferase family. Protoheme IX farnesyltransferase subfamily.</text>
</comment>